<protein>
    <recommendedName>
        <fullName evidence="1">tRNA uridine(34) hydroxylase</fullName>
        <ecNumber evidence="1">1.14.-.-</ecNumber>
    </recommendedName>
    <alternativeName>
        <fullName evidence="1">tRNA hydroxylation protein O</fullName>
    </alternativeName>
</protein>
<accession>Q142P9</accession>
<proteinExistence type="inferred from homology"/>
<organism>
    <name type="scientific">Paraburkholderia xenovorans (strain LB400)</name>
    <dbReference type="NCBI Taxonomy" id="266265"/>
    <lineage>
        <taxon>Bacteria</taxon>
        <taxon>Pseudomonadati</taxon>
        <taxon>Pseudomonadota</taxon>
        <taxon>Betaproteobacteria</taxon>
        <taxon>Burkholderiales</taxon>
        <taxon>Burkholderiaceae</taxon>
        <taxon>Paraburkholderia</taxon>
    </lineage>
</organism>
<comment type="function">
    <text evidence="1">Catalyzes oxygen-dependent 5-hydroxyuridine (ho5U) modification at position 34 in tRNAs.</text>
</comment>
<comment type="catalytic activity">
    <reaction evidence="1">
        <text>uridine(34) in tRNA + AH2 + O2 = 5-hydroxyuridine(34) in tRNA + A + H2O</text>
        <dbReference type="Rhea" id="RHEA:64224"/>
        <dbReference type="Rhea" id="RHEA-COMP:11727"/>
        <dbReference type="Rhea" id="RHEA-COMP:13381"/>
        <dbReference type="ChEBI" id="CHEBI:13193"/>
        <dbReference type="ChEBI" id="CHEBI:15377"/>
        <dbReference type="ChEBI" id="CHEBI:15379"/>
        <dbReference type="ChEBI" id="CHEBI:17499"/>
        <dbReference type="ChEBI" id="CHEBI:65315"/>
        <dbReference type="ChEBI" id="CHEBI:136877"/>
    </reaction>
</comment>
<comment type="similarity">
    <text evidence="1">Belongs to the TrhO family.</text>
</comment>
<gene>
    <name evidence="1" type="primary">trhO</name>
    <name type="ordered locus">Bxeno_A1152</name>
    <name type="ORF">Bxe_A3293</name>
</gene>
<name>TRHO_PARXL</name>
<dbReference type="EC" id="1.14.-.-" evidence="1"/>
<dbReference type="EMBL" id="CP000270">
    <property type="protein sequence ID" value="ABE29690.1"/>
    <property type="molecule type" value="Genomic_DNA"/>
</dbReference>
<dbReference type="RefSeq" id="WP_011487423.1">
    <property type="nucleotide sequence ID" value="NC_007951.1"/>
</dbReference>
<dbReference type="SMR" id="Q142P9"/>
<dbReference type="STRING" id="266265.Bxe_A3293"/>
<dbReference type="KEGG" id="bxb:DR64_994"/>
<dbReference type="KEGG" id="bxe:Bxe_A3293"/>
<dbReference type="PATRIC" id="fig|266265.5.peg.1185"/>
<dbReference type="eggNOG" id="COG1054">
    <property type="taxonomic scope" value="Bacteria"/>
</dbReference>
<dbReference type="OrthoDB" id="9778326at2"/>
<dbReference type="Proteomes" id="UP000001817">
    <property type="component" value="Chromosome 1"/>
</dbReference>
<dbReference type="GO" id="GO:0016705">
    <property type="term" value="F:oxidoreductase activity, acting on paired donors, with incorporation or reduction of molecular oxygen"/>
    <property type="evidence" value="ECO:0007669"/>
    <property type="project" value="UniProtKB-UniRule"/>
</dbReference>
<dbReference type="GO" id="GO:0006400">
    <property type="term" value="P:tRNA modification"/>
    <property type="evidence" value="ECO:0007669"/>
    <property type="project" value="UniProtKB-UniRule"/>
</dbReference>
<dbReference type="CDD" id="cd01518">
    <property type="entry name" value="RHOD_YceA"/>
    <property type="match status" value="1"/>
</dbReference>
<dbReference type="Gene3D" id="3.30.70.100">
    <property type="match status" value="1"/>
</dbReference>
<dbReference type="Gene3D" id="3.40.250.10">
    <property type="entry name" value="Rhodanese-like domain"/>
    <property type="match status" value="1"/>
</dbReference>
<dbReference type="HAMAP" id="MF_00469">
    <property type="entry name" value="TrhO"/>
    <property type="match status" value="1"/>
</dbReference>
<dbReference type="InterPro" id="IPR036046">
    <property type="entry name" value="Acylphosphatase-like_dom_sf"/>
</dbReference>
<dbReference type="InterPro" id="IPR001763">
    <property type="entry name" value="Rhodanese-like_dom"/>
</dbReference>
<dbReference type="InterPro" id="IPR036873">
    <property type="entry name" value="Rhodanese-like_dom_sf"/>
</dbReference>
<dbReference type="InterPro" id="IPR020936">
    <property type="entry name" value="TrhO"/>
</dbReference>
<dbReference type="InterPro" id="IPR040503">
    <property type="entry name" value="TRHO_N"/>
</dbReference>
<dbReference type="NCBIfam" id="NF003703">
    <property type="entry name" value="PRK05320.1"/>
    <property type="match status" value="1"/>
</dbReference>
<dbReference type="PANTHER" id="PTHR43268:SF3">
    <property type="entry name" value="RHODANESE-LIKE DOMAIN-CONTAINING PROTEIN 7-RELATED"/>
    <property type="match status" value="1"/>
</dbReference>
<dbReference type="PANTHER" id="PTHR43268">
    <property type="entry name" value="THIOSULFATE SULFURTRANSFERASE/RHODANESE-LIKE DOMAIN-CONTAINING PROTEIN 2"/>
    <property type="match status" value="1"/>
</dbReference>
<dbReference type="Pfam" id="PF00581">
    <property type="entry name" value="Rhodanese"/>
    <property type="match status" value="1"/>
</dbReference>
<dbReference type="Pfam" id="PF17773">
    <property type="entry name" value="UPF0176_N"/>
    <property type="match status" value="1"/>
</dbReference>
<dbReference type="SMART" id="SM00450">
    <property type="entry name" value="RHOD"/>
    <property type="match status" value="1"/>
</dbReference>
<dbReference type="SUPFAM" id="SSF54975">
    <property type="entry name" value="Acylphosphatase/BLUF domain-like"/>
    <property type="match status" value="1"/>
</dbReference>
<dbReference type="SUPFAM" id="SSF52821">
    <property type="entry name" value="Rhodanese/Cell cycle control phosphatase"/>
    <property type="match status" value="1"/>
</dbReference>
<dbReference type="PROSITE" id="PS50206">
    <property type="entry name" value="RHODANESE_3"/>
    <property type="match status" value="1"/>
</dbReference>
<evidence type="ECO:0000255" key="1">
    <source>
        <dbReference type="HAMAP-Rule" id="MF_00469"/>
    </source>
</evidence>
<reference key="1">
    <citation type="journal article" date="2006" name="Proc. Natl. Acad. Sci. U.S.A.">
        <title>Burkholderia xenovorans LB400 harbors a multi-replicon, 9.73-Mbp genome shaped for versatility.</title>
        <authorList>
            <person name="Chain P.S.G."/>
            <person name="Denef V.J."/>
            <person name="Konstantinidis K.T."/>
            <person name="Vergez L.M."/>
            <person name="Agullo L."/>
            <person name="Reyes V.L."/>
            <person name="Hauser L."/>
            <person name="Cordova M."/>
            <person name="Gomez L."/>
            <person name="Gonzalez M."/>
            <person name="Land M."/>
            <person name="Lao V."/>
            <person name="Larimer F."/>
            <person name="LiPuma J.J."/>
            <person name="Mahenthiralingam E."/>
            <person name="Malfatti S.A."/>
            <person name="Marx C.J."/>
            <person name="Parnell J.J."/>
            <person name="Ramette A."/>
            <person name="Richardson P."/>
            <person name="Seeger M."/>
            <person name="Smith D."/>
            <person name="Spilker T."/>
            <person name="Sul W.J."/>
            <person name="Tsoi T.V."/>
            <person name="Ulrich L.E."/>
            <person name="Zhulin I.B."/>
            <person name="Tiedje J.M."/>
        </authorList>
    </citation>
    <scope>NUCLEOTIDE SEQUENCE [LARGE SCALE GENOMIC DNA]</scope>
    <source>
        <strain>LB400</strain>
    </source>
</reference>
<feature type="chain" id="PRO_1000013734" description="tRNA uridine(34) hydroxylase">
    <location>
        <begin position="1"/>
        <end position="287"/>
    </location>
</feature>
<feature type="domain" description="Rhodanese" evidence="1">
    <location>
        <begin position="132"/>
        <end position="226"/>
    </location>
</feature>
<feature type="active site" description="Cysteine persulfide intermediate" evidence="1">
    <location>
        <position position="186"/>
    </location>
</feature>
<sequence>MSIVNLSSYQFATIEDTAAWRPFVTERCNALGLKGTVLLAPEGINLFVAGTRENTDAFIHYIRHDALFEGKFADLQFKESLSDKQPFTRMLVKLKREIITMKKPAIRPELGRAPFVDAPTLKSWLDRGHDDEGRPVVMLDTRNAFEVDVGTFDNALDYRITKFSEFPEVIEQNRADLEGKTIVSFCTGGIRCEKAAIHMKDVGIENVYQLEGGILKYFEEVGGAHYHGDCFVFDYRTALNPQLEPSKTTQCFGCRAVVTPEAQQSPLYVAGKTCPECHPDSKAARAA</sequence>
<keyword id="KW-0560">Oxidoreductase</keyword>
<keyword id="KW-1185">Reference proteome</keyword>
<keyword id="KW-0819">tRNA processing</keyword>